<reference key="1">
    <citation type="journal article" date="2005" name="Nucleic Acids Res.">
        <title>Genome dynamics and diversity of Shigella species, the etiologic agents of bacillary dysentery.</title>
        <authorList>
            <person name="Yang F."/>
            <person name="Yang J."/>
            <person name="Zhang X."/>
            <person name="Chen L."/>
            <person name="Jiang Y."/>
            <person name="Yan Y."/>
            <person name="Tang X."/>
            <person name="Wang J."/>
            <person name="Xiong Z."/>
            <person name="Dong J."/>
            <person name="Xue Y."/>
            <person name="Zhu Y."/>
            <person name="Xu X."/>
            <person name="Sun L."/>
            <person name="Chen S."/>
            <person name="Nie H."/>
            <person name="Peng J."/>
            <person name="Xu J."/>
            <person name="Wang Y."/>
            <person name="Yuan Z."/>
            <person name="Wen Y."/>
            <person name="Yao Z."/>
            <person name="Shen Y."/>
            <person name="Qiang B."/>
            <person name="Hou Y."/>
            <person name="Yu J."/>
            <person name="Jin Q."/>
        </authorList>
    </citation>
    <scope>NUCLEOTIDE SEQUENCE [LARGE SCALE GENOMIC DNA]</scope>
    <source>
        <strain>Sb227</strain>
    </source>
</reference>
<protein>
    <recommendedName>
        <fullName evidence="1">Ribosomal protein uS12 methylthiotransferase RimO</fullName>
        <shortName evidence="1">uS12 MTTase</shortName>
        <shortName evidence="1">uS12 methylthiotransferase</shortName>
        <ecNumber evidence="1">2.8.4.4</ecNumber>
    </recommendedName>
    <alternativeName>
        <fullName evidence="1">Ribosomal protein uS12 (aspartate-C(3))-methylthiotransferase</fullName>
    </alternativeName>
    <alternativeName>
        <fullName evidence="1">Ribosome maturation factor RimO</fullName>
    </alternativeName>
</protein>
<gene>
    <name evidence="1" type="primary">rimO</name>
    <name type="ordered locus">SBO_0727</name>
</gene>
<proteinExistence type="inferred from homology"/>
<keyword id="KW-0004">4Fe-4S</keyword>
<keyword id="KW-0963">Cytoplasm</keyword>
<keyword id="KW-0408">Iron</keyword>
<keyword id="KW-0411">Iron-sulfur</keyword>
<keyword id="KW-0479">Metal-binding</keyword>
<keyword id="KW-0949">S-adenosyl-L-methionine</keyword>
<keyword id="KW-0808">Transferase</keyword>
<feature type="chain" id="PRO_0000375010" description="Ribosomal protein uS12 methylthiotransferase RimO">
    <location>
        <begin position="1"/>
        <end position="441"/>
    </location>
</feature>
<feature type="domain" description="MTTase N-terminal" evidence="1">
    <location>
        <begin position="8"/>
        <end position="118"/>
    </location>
</feature>
<feature type="domain" description="Radical SAM core" evidence="2">
    <location>
        <begin position="136"/>
        <end position="373"/>
    </location>
</feature>
<feature type="domain" description="TRAM" evidence="1">
    <location>
        <begin position="376"/>
        <end position="441"/>
    </location>
</feature>
<feature type="binding site" evidence="1">
    <location>
        <position position="17"/>
    </location>
    <ligand>
        <name>[4Fe-4S] cluster</name>
        <dbReference type="ChEBI" id="CHEBI:49883"/>
        <label>1</label>
    </ligand>
</feature>
<feature type="binding site" evidence="1">
    <location>
        <position position="53"/>
    </location>
    <ligand>
        <name>[4Fe-4S] cluster</name>
        <dbReference type="ChEBI" id="CHEBI:49883"/>
        <label>1</label>
    </ligand>
</feature>
<feature type="binding site" evidence="1">
    <location>
        <position position="82"/>
    </location>
    <ligand>
        <name>[4Fe-4S] cluster</name>
        <dbReference type="ChEBI" id="CHEBI:49883"/>
        <label>1</label>
    </ligand>
</feature>
<feature type="binding site" evidence="1">
    <location>
        <position position="150"/>
    </location>
    <ligand>
        <name>[4Fe-4S] cluster</name>
        <dbReference type="ChEBI" id="CHEBI:49883"/>
        <label>2</label>
        <note>4Fe-4S-S-AdoMet</note>
    </ligand>
</feature>
<feature type="binding site" evidence="1">
    <location>
        <position position="154"/>
    </location>
    <ligand>
        <name>[4Fe-4S] cluster</name>
        <dbReference type="ChEBI" id="CHEBI:49883"/>
        <label>2</label>
        <note>4Fe-4S-S-AdoMet</note>
    </ligand>
</feature>
<feature type="binding site" evidence="1">
    <location>
        <position position="157"/>
    </location>
    <ligand>
        <name>[4Fe-4S] cluster</name>
        <dbReference type="ChEBI" id="CHEBI:49883"/>
        <label>2</label>
        <note>4Fe-4S-S-AdoMet</note>
    </ligand>
</feature>
<evidence type="ECO:0000255" key="1">
    <source>
        <dbReference type="HAMAP-Rule" id="MF_01865"/>
    </source>
</evidence>
<evidence type="ECO:0000255" key="2">
    <source>
        <dbReference type="PROSITE-ProRule" id="PRU01266"/>
    </source>
</evidence>
<organism>
    <name type="scientific">Shigella boydii serotype 4 (strain Sb227)</name>
    <dbReference type="NCBI Taxonomy" id="300268"/>
    <lineage>
        <taxon>Bacteria</taxon>
        <taxon>Pseudomonadati</taxon>
        <taxon>Pseudomonadota</taxon>
        <taxon>Gammaproteobacteria</taxon>
        <taxon>Enterobacterales</taxon>
        <taxon>Enterobacteriaceae</taxon>
        <taxon>Shigella</taxon>
    </lineage>
</organism>
<sequence>MSKVTPQPKIGFVSLGCPKNLVDSERILTELRTEGYDVVPSYDDADMVIVNTCGFIDSAVQESLEAIGEALNENGKVIVTGCLGAKEDQIREVHPKVLEITGPHSYEQVLEHVHHYVPKPKHNPFLSLVPEQGVKLTPRHYAYLKISEGCNHRCTFCIIPSMRGDLVSRPIGEVLSEAKRLVDAGVKEILVISQDTSAYGVDVKHRTGFHNGEPVKTSMVSLCEQLSKLGIWTRLHYVYPYPHVDDVIPLMAEGKILPYLDIPLQHASPRILKLMKRPGSVDRQLARIKQWREICPELTLRSTFIVGFPGETEEDFQMLLDFLKEARLDRVGCFKYSPVEGADANALPDQVPEEVKEERWNRFMQLQQQISAERLQEKVGREILVIIDEVDEEGAIGRSMADAPEIDGAVYLNGETNVKPGDILRVKVEHADEYDLWGSRV</sequence>
<name>RIMO_SHIBS</name>
<dbReference type="EC" id="2.8.4.4" evidence="1"/>
<dbReference type="EMBL" id="CP000036">
    <property type="protein sequence ID" value="ABB65401.1"/>
    <property type="molecule type" value="Genomic_DNA"/>
</dbReference>
<dbReference type="RefSeq" id="WP_000049367.1">
    <property type="nucleotide sequence ID" value="NC_007613.1"/>
</dbReference>
<dbReference type="SMR" id="Q323V7"/>
<dbReference type="GeneID" id="75204700"/>
<dbReference type="KEGG" id="sbo:SBO_0727"/>
<dbReference type="HOGENOM" id="CLU_018697_0_0_6"/>
<dbReference type="Proteomes" id="UP000007067">
    <property type="component" value="Chromosome"/>
</dbReference>
<dbReference type="GO" id="GO:0005829">
    <property type="term" value="C:cytosol"/>
    <property type="evidence" value="ECO:0007669"/>
    <property type="project" value="TreeGrafter"/>
</dbReference>
<dbReference type="GO" id="GO:0051539">
    <property type="term" value="F:4 iron, 4 sulfur cluster binding"/>
    <property type="evidence" value="ECO:0007669"/>
    <property type="project" value="UniProtKB-UniRule"/>
</dbReference>
<dbReference type="GO" id="GO:0035599">
    <property type="term" value="F:aspartic acid methylthiotransferase activity"/>
    <property type="evidence" value="ECO:0007669"/>
    <property type="project" value="TreeGrafter"/>
</dbReference>
<dbReference type="GO" id="GO:0046872">
    <property type="term" value="F:metal ion binding"/>
    <property type="evidence" value="ECO:0007669"/>
    <property type="project" value="UniProtKB-KW"/>
</dbReference>
<dbReference type="GO" id="GO:0103039">
    <property type="term" value="F:protein methylthiotransferase activity"/>
    <property type="evidence" value="ECO:0007669"/>
    <property type="project" value="UniProtKB-EC"/>
</dbReference>
<dbReference type="GO" id="GO:0006400">
    <property type="term" value="P:tRNA modification"/>
    <property type="evidence" value="ECO:0007669"/>
    <property type="project" value="InterPro"/>
</dbReference>
<dbReference type="CDD" id="cd01335">
    <property type="entry name" value="Radical_SAM"/>
    <property type="match status" value="1"/>
</dbReference>
<dbReference type="FunFam" id="2.40.50.140:FF:000060">
    <property type="entry name" value="Ribosomal protein S12 methylthiotransferase RimO"/>
    <property type="match status" value="1"/>
</dbReference>
<dbReference type="FunFam" id="3.40.50.12160:FF:000002">
    <property type="entry name" value="Ribosomal protein S12 methylthiotransferase RimO"/>
    <property type="match status" value="1"/>
</dbReference>
<dbReference type="FunFam" id="3.80.30.20:FF:000001">
    <property type="entry name" value="tRNA-2-methylthio-N(6)-dimethylallyladenosine synthase 2"/>
    <property type="match status" value="1"/>
</dbReference>
<dbReference type="Gene3D" id="3.40.50.12160">
    <property type="entry name" value="Methylthiotransferase, N-terminal domain"/>
    <property type="match status" value="1"/>
</dbReference>
<dbReference type="Gene3D" id="2.40.50.140">
    <property type="entry name" value="Nucleic acid-binding proteins"/>
    <property type="match status" value="1"/>
</dbReference>
<dbReference type="Gene3D" id="3.80.30.20">
    <property type="entry name" value="tm_1862 like domain"/>
    <property type="match status" value="1"/>
</dbReference>
<dbReference type="HAMAP" id="MF_01865">
    <property type="entry name" value="MTTase_RimO"/>
    <property type="match status" value="1"/>
</dbReference>
<dbReference type="InterPro" id="IPR006638">
    <property type="entry name" value="Elp3/MiaA/NifB-like_rSAM"/>
</dbReference>
<dbReference type="InterPro" id="IPR005839">
    <property type="entry name" value="Methylthiotransferase"/>
</dbReference>
<dbReference type="InterPro" id="IPR020612">
    <property type="entry name" value="Methylthiotransferase_CS"/>
</dbReference>
<dbReference type="InterPro" id="IPR013848">
    <property type="entry name" value="Methylthiotransferase_N"/>
</dbReference>
<dbReference type="InterPro" id="IPR038135">
    <property type="entry name" value="Methylthiotransferase_N_sf"/>
</dbReference>
<dbReference type="InterPro" id="IPR012340">
    <property type="entry name" value="NA-bd_OB-fold"/>
</dbReference>
<dbReference type="InterPro" id="IPR005840">
    <property type="entry name" value="Ribosomal_uS12_MeSTrfase_RimO"/>
</dbReference>
<dbReference type="InterPro" id="IPR007197">
    <property type="entry name" value="rSAM"/>
</dbReference>
<dbReference type="InterPro" id="IPR023404">
    <property type="entry name" value="rSAM_horseshoe"/>
</dbReference>
<dbReference type="InterPro" id="IPR002792">
    <property type="entry name" value="TRAM_dom"/>
</dbReference>
<dbReference type="NCBIfam" id="TIGR01125">
    <property type="entry name" value="30S ribosomal protein S12 methylthiotransferase RimO"/>
    <property type="match status" value="1"/>
</dbReference>
<dbReference type="NCBIfam" id="TIGR00089">
    <property type="entry name" value="MiaB/RimO family radical SAM methylthiotransferase"/>
    <property type="match status" value="1"/>
</dbReference>
<dbReference type="PANTHER" id="PTHR43837">
    <property type="entry name" value="RIBOSOMAL PROTEIN S12 METHYLTHIOTRANSFERASE RIMO"/>
    <property type="match status" value="1"/>
</dbReference>
<dbReference type="PANTHER" id="PTHR43837:SF1">
    <property type="entry name" value="RIBOSOMAL PROTEIN US12 METHYLTHIOTRANSFERASE RIMO"/>
    <property type="match status" value="1"/>
</dbReference>
<dbReference type="Pfam" id="PF04055">
    <property type="entry name" value="Radical_SAM"/>
    <property type="match status" value="1"/>
</dbReference>
<dbReference type="Pfam" id="PF18693">
    <property type="entry name" value="TRAM_2"/>
    <property type="match status" value="1"/>
</dbReference>
<dbReference type="Pfam" id="PF00919">
    <property type="entry name" value="UPF0004"/>
    <property type="match status" value="1"/>
</dbReference>
<dbReference type="SFLD" id="SFLDG01082">
    <property type="entry name" value="B12-binding_domain_containing"/>
    <property type="match status" value="1"/>
</dbReference>
<dbReference type="SFLD" id="SFLDS00029">
    <property type="entry name" value="Radical_SAM"/>
    <property type="match status" value="1"/>
</dbReference>
<dbReference type="SFLD" id="SFLDF00274">
    <property type="entry name" value="ribosomal_protein_S12_methylth"/>
    <property type="match status" value="1"/>
</dbReference>
<dbReference type="SMART" id="SM00729">
    <property type="entry name" value="Elp3"/>
    <property type="match status" value="1"/>
</dbReference>
<dbReference type="SUPFAM" id="SSF102114">
    <property type="entry name" value="Radical SAM enzymes"/>
    <property type="match status" value="1"/>
</dbReference>
<dbReference type="PROSITE" id="PS51449">
    <property type="entry name" value="MTTASE_N"/>
    <property type="match status" value="1"/>
</dbReference>
<dbReference type="PROSITE" id="PS01278">
    <property type="entry name" value="MTTASE_RADICAL"/>
    <property type="match status" value="1"/>
</dbReference>
<dbReference type="PROSITE" id="PS51918">
    <property type="entry name" value="RADICAL_SAM"/>
    <property type="match status" value="1"/>
</dbReference>
<dbReference type="PROSITE" id="PS50926">
    <property type="entry name" value="TRAM"/>
    <property type="match status" value="1"/>
</dbReference>
<comment type="function">
    <text evidence="1">Catalyzes the methylthiolation of an aspartic acid residue of ribosomal protein uS12.</text>
</comment>
<comment type="catalytic activity">
    <reaction evidence="1">
        <text>L-aspartate(89)-[ribosomal protein uS12]-hydrogen + (sulfur carrier)-SH + AH2 + 2 S-adenosyl-L-methionine = 3-methylsulfanyl-L-aspartate(89)-[ribosomal protein uS12]-hydrogen + (sulfur carrier)-H + 5'-deoxyadenosine + L-methionine + A + S-adenosyl-L-homocysteine + 2 H(+)</text>
        <dbReference type="Rhea" id="RHEA:37087"/>
        <dbReference type="Rhea" id="RHEA-COMP:10460"/>
        <dbReference type="Rhea" id="RHEA-COMP:10461"/>
        <dbReference type="Rhea" id="RHEA-COMP:14737"/>
        <dbReference type="Rhea" id="RHEA-COMP:14739"/>
        <dbReference type="ChEBI" id="CHEBI:13193"/>
        <dbReference type="ChEBI" id="CHEBI:15378"/>
        <dbReference type="ChEBI" id="CHEBI:17319"/>
        <dbReference type="ChEBI" id="CHEBI:17499"/>
        <dbReference type="ChEBI" id="CHEBI:29917"/>
        <dbReference type="ChEBI" id="CHEBI:29961"/>
        <dbReference type="ChEBI" id="CHEBI:57844"/>
        <dbReference type="ChEBI" id="CHEBI:57856"/>
        <dbReference type="ChEBI" id="CHEBI:59789"/>
        <dbReference type="ChEBI" id="CHEBI:64428"/>
        <dbReference type="ChEBI" id="CHEBI:73599"/>
        <dbReference type="EC" id="2.8.4.4"/>
    </reaction>
</comment>
<comment type="cofactor">
    <cofactor evidence="1">
        <name>[4Fe-4S] cluster</name>
        <dbReference type="ChEBI" id="CHEBI:49883"/>
    </cofactor>
    <text evidence="1">Binds 2 [4Fe-4S] clusters. One cluster is coordinated with 3 cysteines and an exchangeable S-adenosyl-L-methionine.</text>
</comment>
<comment type="subcellular location">
    <subcellularLocation>
        <location evidence="1">Cytoplasm</location>
    </subcellularLocation>
</comment>
<comment type="similarity">
    <text evidence="1">Belongs to the methylthiotransferase family. RimO subfamily.</text>
</comment>
<accession>Q323V7</accession>